<proteinExistence type="evidence at protein level"/>
<accession>P36607</accession>
<gene>
    <name evidence="10" type="primary">rad8</name>
    <name evidence="13" type="ORF">SPAC13G6.01c</name>
    <name type="ORF">SPAC5H10.14c</name>
</gene>
<reference key="1">
    <citation type="journal article" date="1993" name="Nucleic Acids Res.">
        <title>Cloning and characterisation of the Schizosaccharomyces pombe rad8 gene, a member of the SNF2 helicase family.</title>
        <authorList>
            <person name="Doe C.L."/>
            <person name="Murray J.M."/>
            <person name="Shayeghi M."/>
            <person name="Hoskins M."/>
            <person name="Lehmann A.R."/>
            <person name="Carrs A.M."/>
            <person name="Watts F.Z."/>
        </authorList>
    </citation>
    <scope>NUCLEOTIDE SEQUENCE [GENOMIC DNA]</scope>
    <scope>FUNCTION</scope>
</reference>
<reference key="2">
    <citation type="journal article" date="2002" name="Nature">
        <title>The genome sequence of Schizosaccharomyces pombe.</title>
        <authorList>
            <person name="Wood V."/>
            <person name="Gwilliam R."/>
            <person name="Rajandream M.A."/>
            <person name="Lyne M.H."/>
            <person name="Lyne R."/>
            <person name="Stewart A."/>
            <person name="Sgouros J.G."/>
            <person name="Peat N."/>
            <person name="Hayles J."/>
            <person name="Baker S.G."/>
            <person name="Basham D."/>
            <person name="Bowman S."/>
            <person name="Brooks K."/>
            <person name="Brown D."/>
            <person name="Brown S."/>
            <person name="Chillingworth T."/>
            <person name="Churcher C.M."/>
            <person name="Collins M."/>
            <person name="Connor R."/>
            <person name="Cronin A."/>
            <person name="Davis P."/>
            <person name="Feltwell T."/>
            <person name="Fraser A."/>
            <person name="Gentles S."/>
            <person name="Goble A."/>
            <person name="Hamlin N."/>
            <person name="Harris D.E."/>
            <person name="Hidalgo J."/>
            <person name="Hodgson G."/>
            <person name="Holroyd S."/>
            <person name="Hornsby T."/>
            <person name="Howarth S."/>
            <person name="Huckle E.J."/>
            <person name="Hunt S."/>
            <person name="Jagels K."/>
            <person name="James K.D."/>
            <person name="Jones L."/>
            <person name="Jones M."/>
            <person name="Leather S."/>
            <person name="McDonald S."/>
            <person name="McLean J."/>
            <person name="Mooney P."/>
            <person name="Moule S."/>
            <person name="Mungall K.L."/>
            <person name="Murphy L.D."/>
            <person name="Niblett D."/>
            <person name="Odell C."/>
            <person name="Oliver K."/>
            <person name="O'Neil S."/>
            <person name="Pearson D."/>
            <person name="Quail M.A."/>
            <person name="Rabbinowitsch E."/>
            <person name="Rutherford K.M."/>
            <person name="Rutter S."/>
            <person name="Saunders D."/>
            <person name="Seeger K."/>
            <person name="Sharp S."/>
            <person name="Skelton J."/>
            <person name="Simmonds M.N."/>
            <person name="Squares R."/>
            <person name="Squares S."/>
            <person name="Stevens K."/>
            <person name="Taylor K."/>
            <person name="Taylor R.G."/>
            <person name="Tivey A."/>
            <person name="Walsh S.V."/>
            <person name="Warren T."/>
            <person name="Whitehead S."/>
            <person name="Woodward J.R."/>
            <person name="Volckaert G."/>
            <person name="Aert R."/>
            <person name="Robben J."/>
            <person name="Grymonprez B."/>
            <person name="Weltjens I."/>
            <person name="Vanstreels E."/>
            <person name="Rieger M."/>
            <person name="Schaefer M."/>
            <person name="Mueller-Auer S."/>
            <person name="Gabel C."/>
            <person name="Fuchs M."/>
            <person name="Duesterhoeft A."/>
            <person name="Fritzc C."/>
            <person name="Holzer E."/>
            <person name="Moestl D."/>
            <person name="Hilbert H."/>
            <person name="Borzym K."/>
            <person name="Langer I."/>
            <person name="Beck A."/>
            <person name="Lehrach H."/>
            <person name="Reinhardt R."/>
            <person name="Pohl T.M."/>
            <person name="Eger P."/>
            <person name="Zimmermann W."/>
            <person name="Wedler H."/>
            <person name="Wambutt R."/>
            <person name="Purnelle B."/>
            <person name="Goffeau A."/>
            <person name="Cadieu E."/>
            <person name="Dreano S."/>
            <person name="Gloux S."/>
            <person name="Lelaure V."/>
            <person name="Mottier S."/>
            <person name="Galibert F."/>
            <person name="Aves S.J."/>
            <person name="Xiang Z."/>
            <person name="Hunt C."/>
            <person name="Moore K."/>
            <person name="Hurst S.M."/>
            <person name="Lucas M."/>
            <person name="Rochet M."/>
            <person name="Gaillardin C."/>
            <person name="Tallada V.A."/>
            <person name="Garzon A."/>
            <person name="Thode G."/>
            <person name="Daga R.R."/>
            <person name="Cruzado L."/>
            <person name="Jimenez J."/>
            <person name="Sanchez M."/>
            <person name="del Rey F."/>
            <person name="Benito J."/>
            <person name="Dominguez A."/>
            <person name="Revuelta J.L."/>
            <person name="Moreno S."/>
            <person name="Armstrong J."/>
            <person name="Forsburg S.L."/>
            <person name="Cerutti L."/>
            <person name="Lowe T."/>
            <person name="McCombie W.R."/>
            <person name="Paulsen I."/>
            <person name="Potashkin J."/>
            <person name="Shpakovski G.V."/>
            <person name="Ussery D."/>
            <person name="Barrell B.G."/>
            <person name="Nurse P."/>
        </authorList>
    </citation>
    <scope>NUCLEOTIDE SEQUENCE [LARGE SCALE GENOMIC DNA]</scope>
    <source>
        <strain>972 / ATCC 24843</strain>
    </source>
</reference>
<reference key="3">
    <citation type="journal article" date="2004" name="Eukaryot. Cell">
        <title>DNA repair functions that control sensitivity to topoisomerase-targeting drugs.</title>
        <authorList>
            <person name="Malik M."/>
            <person name="Nitiss J.L."/>
        </authorList>
    </citation>
    <scope>FUNCTION</scope>
</reference>
<reference key="4">
    <citation type="journal article" date="2006" name="Nat. Biotechnol.">
        <title>ORFeome cloning and global analysis of protein localization in the fission yeast Schizosaccharomyces pombe.</title>
        <authorList>
            <person name="Matsuyama A."/>
            <person name="Arai R."/>
            <person name="Yashiroda Y."/>
            <person name="Shirai A."/>
            <person name="Kamata A."/>
            <person name="Sekido S."/>
            <person name="Kobayashi Y."/>
            <person name="Hashimoto A."/>
            <person name="Hamamoto M."/>
            <person name="Hiraoka Y."/>
            <person name="Horinouchi S."/>
            <person name="Yoshida M."/>
        </authorList>
    </citation>
    <scope>SUBCELLULAR LOCATION [LARGE SCALE ANALYSIS]</scope>
</reference>
<reference key="5">
    <citation type="journal article" date="2008" name="J. Proteome Res.">
        <title>Phosphoproteome analysis of fission yeast.</title>
        <authorList>
            <person name="Wilson-Grady J.T."/>
            <person name="Villen J."/>
            <person name="Gygi S.P."/>
        </authorList>
    </citation>
    <scope>PHOSPHORYLATION [LARGE SCALE ANALYSIS] AT SER-18</scope>
    <scope>IDENTIFICATION BY MASS SPECTROMETRY</scope>
</reference>
<evidence type="ECO:0000250" key="1">
    <source>
        <dbReference type="UniProtKB" id="P32849"/>
    </source>
</evidence>
<evidence type="ECO:0000255" key="2">
    <source>
        <dbReference type="PROSITE-ProRule" id="PRU00175"/>
    </source>
</evidence>
<evidence type="ECO:0000255" key="3">
    <source>
        <dbReference type="PROSITE-ProRule" id="PRU00541"/>
    </source>
</evidence>
<evidence type="ECO:0000255" key="4">
    <source>
        <dbReference type="PROSITE-ProRule" id="PRU00542"/>
    </source>
</evidence>
<evidence type="ECO:0000256" key="5">
    <source>
        <dbReference type="SAM" id="MobiDB-lite"/>
    </source>
</evidence>
<evidence type="ECO:0000269" key="6">
    <source>
    </source>
</evidence>
<evidence type="ECO:0000269" key="7">
    <source>
    </source>
</evidence>
<evidence type="ECO:0000269" key="8">
    <source>
    </source>
</evidence>
<evidence type="ECO:0000269" key="9">
    <source>
    </source>
</evidence>
<evidence type="ECO:0000303" key="10">
    <source>
    </source>
</evidence>
<evidence type="ECO:0000305" key="11"/>
<evidence type="ECO:0000305" key="12">
    <source>
    </source>
</evidence>
<evidence type="ECO:0000312" key="13">
    <source>
        <dbReference type="PomBase" id="SPAC13G6.01c"/>
    </source>
</evidence>
<organism>
    <name type="scientific">Schizosaccharomyces pombe (strain 972 / ATCC 24843)</name>
    <name type="common">Fission yeast</name>
    <dbReference type="NCBI Taxonomy" id="284812"/>
    <lineage>
        <taxon>Eukaryota</taxon>
        <taxon>Fungi</taxon>
        <taxon>Dikarya</taxon>
        <taxon>Ascomycota</taxon>
        <taxon>Taphrinomycotina</taxon>
        <taxon>Schizosaccharomycetes</taxon>
        <taxon>Schizosaccharomycetales</taxon>
        <taxon>Schizosaccharomycetaceae</taxon>
        <taxon>Schizosaccharomyces</taxon>
    </lineage>
</organism>
<name>RAD5_SCHPO</name>
<comment type="function">
    <text evidence="1 6 9">Probable helicase, member of the UBC2/RAD6 epistasis group. Functions with DNA repair protein rad18 in error-free postreplication DNA repair. Involved in the maintenance of wild-type rates of instability of simple repetitive sequences such as poly(GT) repeats (By similarity). Plays a role in surviving topoisomerase-mediated DNA damage (PubMed:14871939).</text>
</comment>
<comment type="subcellular location">
    <subcellularLocation>
        <location evidence="1">Cytoplasm</location>
    </subcellularLocation>
    <subcellularLocation>
        <location evidence="7">Nucleus</location>
    </subcellularLocation>
</comment>
<comment type="similarity">
    <text evidence="11">Belongs to the SNF2/RAD54 helicase family.</text>
</comment>
<sequence length="1133" mass="128610">MKRKVQKIIDEAPLEENSPPRFFDSDVEADSKPNDLTAANSIVDLKTNSQHENANAAGKEYGDSGVSESWVLDFLSVTGEKTISEFLAQKIWKTSNGDLNVAVDMYFDESFNIKNSNPDSESQKDTDASLTQMDQLSNTVSVKDLSINRNTNKKALNAVSPSLNLSSNSSVQDVSIDKEEMMKKQSRNALTPLDFIMKKNELMKYIGCFGVEAYSTASGTRTLQAGERIYLERQKLSIKSQSRNSRKKSKLLSINSSCYSNIVRFCNSDHHEIGKLPTEVASVISTLMEQGFWSFEAICIYSDNIIRFGSNVTLQVYCFINVNHPSLNRSPFTLATNSMQEEEEHLKASFAQNKRDHLLRLFTWIALEPDLEDCNTKESIHIDDILKTSSLPEARDESNSDLTPSSTEDEEDVVSDQLAILYDKVKTSGAELPSAPKPSTFALDLREYQKQALYWMCCKEEGVQSDGSAPKLHPLWSRFRFPKDSEFPEFFKCSSDDDNTHFYVNLYTGETTMLFPNSMPYHRGGILADEMGLGKTIEVLSLIHSRPCFSTDEIPEAFRHSKPSLPVASRTTLVVAPMSLLDQWHSEACKVSQGTKFRSMIYYGSEKPLDLKSCVIDTSTAPLIIITSYGVLLSEFSQQSHSSGLFSVHWFRVVLDEGHNIRNRESKTAKACHSISSQNRWVITGTPIVNKLDDLYSLIKFMRYEPWCNYTYWQTFVSLPYQSKDVLKALNVVQSILEFLVLRRTKETKDRNGNSIVTLPPKTVKIEYLDFSDSERKIYDSLYTKAKSTVNANIVAGTLFRNYTTILGLLLRLRQACCDPVLLSNMTINSETFDDFEFSVEQFNSLINQFVVTGKPIPSDILKIDTLKSFEALITECPICCNEPIQNPLLLNCKHACCGDCLSEHIQYQKRRNIIPPLCHTCRQPFNEQDVYKPFFVKNNGTQSTLLVGEEVKWKYWNRLQSVKLNGLLGQLRQLTHSSEPEKVVIFSQFTTFLDIIADVLESEKMGYARFDGTMSQQMRSTALETFRNDPDVNVLIISLKAGGVGLNLTCANHVFIMDPWWSWSVEAQAIDRIHRLGQEKPVFVTRYIVRDTVEERMLKIQERKNFITGTLGMSEGKQQVQSIEDIKMLFEY</sequence>
<dbReference type="EC" id="3.6.4.-"/>
<dbReference type="EMBL" id="X74615">
    <property type="protein sequence ID" value="CAA52686.1"/>
    <property type="molecule type" value="Genomic_DNA"/>
</dbReference>
<dbReference type="EMBL" id="CU329670">
    <property type="protein sequence ID" value="CAA89964.2"/>
    <property type="molecule type" value="Genomic_DNA"/>
</dbReference>
<dbReference type="PIR" id="S41478">
    <property type="entry name" value="S41478"/>
</dbReference>
<dbReference type="RefSeq" id="XP_001713034.1">
    <property type="nucleotide sequence ID" value="XM_001712982.2"/>
</dbReference>
<dbReference type="SMR" id="P36607"/>
<dbReference type="BioGRID" id="280467">
    <property type="interactions" value="58"/>
</dbReference>
<dbReference type="FunCoup" id="P36607">
    <property type="interactions" value="356"/>
</dbReference>
<dbReference type="STRING" id="284812.P36607"/>
<dbReference type="iPTMnet" id="P36607"/>
<dbReference type="PaxDb" id="4896-SPAC13G6.01c.1"/>
<dbReference type="EnsemblFungi" id="SPAC13G6.01c.1">
    <property type="protein sequence ID" value="SPAC13G6.01c.1:pep"/>
    <property type="gene ID" value="SPAC13G6.01c"/>
</dbReference>
<dbReference type="PomBase" id="SPAC13G6.01c">
    <property type="gene designation" value="rad8"/>
</dbReference>
<dbReference type="VEuPathDB" id="FungiDB:SPAC13G6.01c"/>
<dbReference type="eggNOG" id="KOG1001">
    <property type="taxonomic scope" value="Eukaryota"/>
</dbReference>
<dbReference type="HOGENOM" id="CLU_000315_2_5_1"/>
<dbReference type="InParanoid" id="P36607"/>
<dbReference type="OMA" id="KVEPWSN"/>
<dbReference type="PhylomeDB" id="P36607"/>
<dbReference type="PRO" id="PR:P36607"/>
<dbReference type="Proteomes" id="UP000002485">
    <property type="component" value="Chromosome I"/>
</dbReference>
<dbReference type="GO" id="GO:0005737">
    <property type="term" value="C:cytoplasm"/>
    <property type="evidence" value="ECO:0007669"/>
    <property type="project" value="UniProtKB-SubCell"/>
</dbReference>
<dbReference type="GO" id="GO:0005634">
    <property type="term" value="C:nucleus"/>
    <property type="evidence" value="ECO:0007005"/>
    <property type="project" value="PomBase"/>
</dbReference>
<dbReference type="GO" id="GO:0035861">
    <property type="term" value="C:site of double-strand break"/>
    <property type="evidence" value="ECO:0000314"/>
    <property type="project" value="PomBase"/>
</dbReference>
<dbReference type="GO" id="GO:0005524">
    <property type="term" value="F:ATP binding"/>
    <property type="evidence" value="ECO:0007669"/>
    <property type="project" value="UniProtKB-KW"/>
</dbReference>
<dbReference type="GO" id="GO:0016887">
    <property type="term" value="F:ATP hydrolysis activity"/>
    <property type="evidence" value="ECO:0000305"/>
    <property type="project" value="PomBase"/>
</dbReference>
<dbReference type="GO" id="GO:0008094">
    <property type="term" value="F:ATP-dependent activity, acting on DNA"/>
    <property type="evidence" value="ECO:0000318"/>
    <property type="project" value="GO_Central"/>
</dbReference>
<dbReference type="GO" id="GO:0003677">
    <property type="term" value="F:DNA binding"/>
    <property type="evidence" value="ECO:0000266"/>
    <property type="project" value="PomBase"/>
</dbReference>
<dbReference type="GO" id="GO:0004386">
    <property type="term" value="F:helicase activity"/>
    <property type="evidence" value="ECO:0007669"/>
    <property type="project" value="UniProtKB-KW"/>
</dbReference>
<dbReference type="GO" id="GO:0061630">
    <property type="term" value="F:ubiquitin protein ligase activity"/>
    <property type="evidence" value="ECO:0000315"/>
    <property type="project" value="PomBase"/>
</dbReference>
<dbReference type="GO" id="GO:0008270">
    <property type="term" value="F:zinc ion binding"/>
    <property type="evidence" value="ECO:0007669"/>
    <property type="project" value="UniProtKB-KW"/>
</dbReference>
<dbReference type="GO" id="GO:0006281">
    <property type="term" value="P:DNA repair"/>
    <property type="evidence" value="ECO:0000318"/>
    <property type="project" value="GO_Central"/>
</dbReference>
<dbReference type="GO" id="GO:0006289">
    <property type="term" value="P:nucleotide-excision repair"/>
    <property type="evidence" value="ECO:0000315"/>
    <property type="project" value="PomBase"/>
</dbReference>
<dbReference type="GO" id="GO:0006301">
    <property type="term" value="P:postreplication repair"/>
    <property type="evidence" value="ECO:0000266"/>
    <property type="project" value="PomBase"/>
</dbReference>
<dbReference type="CDD" id="cd18008">
    <property type="entry name" value="DEXDc_SHPRH-like"/>
    <property type="match status" value="1"/>
</dbReference>
<dbReference type="CDD" id="cd16572">
    <property type="entry name" value="RING-HC_SpRad8-like"/>
    <property type="match status" value="1"/>
</dbReference>
<dbReference type="CDD" id="cd18793">
    <property type="entry name" value="SF2_C_SNF"/>
    <property type="match status" value="1"/>
</dbReference>
<dbReference type="Gene3D" id="3.40.50.300">
    <property type="entry name" value="P-loop containing nucleotide triphosphate hydrolases"/>
    <property type="match status" value="1"/>
</dbReference>
<dbReference type="Gene3D" id="3.40.50.10810">
    <property type="entry name" value="Tandem AAA-ATPase domain"/>
    <property type="match status" value="1"/>
</dbReference>
<dbReference type="Gene3D" id="3.30.40.10">
    <property type="entry name" value="Zinc/RING finger domain, C3HC4 (zinc finger)"/>
    <property type="match status" value="1"/>
</dbReference>
<dbReference type="InterPro" id="IPR014001">
    <property type="entry name" value="Helicase_ATP-bd"/>
</dbReference>
<dbReference type="InterPro" id="IPR001650">
    <property type="entry name" value="Helicase_C-like"/>
</dbReference>
<dbReference type="InterPro" id="IPR014905">
    <property type="entry name" value="HIRAN"/>
</dbReference>
<dbReference type="InterPro" id="IPR027417">
    <property type="entry name" value="P-loop_NTPase"/>
</dbReference>
<dbReference type="InterPro" id="IPR038718">
    <property type="entry name" value="SNF2-like_sf"/>
</dbReference>
<dbReference type="InterPro" id="IPR049730">
    <property type="entry name" value="SNF2/RAD54-like_C"/>
</dbReference>
<dbReference type="InterPro" id="IPR000330">
    <property type="entry name" value="SNF2_N"/>
</dbReference>
<dbReference type="InterPro" id="IPR050628">
    <property type="entry name" value="SNF2_RAD54_helicase_TF"/>
</dbReference>
<dbReference type="InterPro" id="IPR018957">
    <property type="entry name" value="Znf_C3HC4_RING-type"/>
</dbReference>
<dbReference type="InterPro" id="IPR001841">
    <property type="entry name" value="Znf_RING"/>
</dbReference>
<dbReference type="InterPro" id="IPR013083">
    <property type="entry name" value="Znf_RING/FYVE/PHD"/>
</dbReference>
<dbReference type="PANTHER" id="PTHR45626:SF22">
    <property type="entry name" value="DNA REPAIR PROTEIN RAD5"/>
    <property type="match status" value="1"/>
</dbReference>
<dbReference type="PANTHER" id="PTHR45626">
    <property type="entry name" value="TRANSCRIPTION TERMINATION FACTOR 2-RELATED"/>
    <property type="match status" value="1"/>
</dbReference>
<dbReference type="Pfam" id="PF00271">
    <property type="entry name" value="Helicase_C"/>
    <property type="match status" value="1"/>
</dbReference>
<dbReference type="Pfam" id="PF08797">
    <property type="entry name" value="HIRAN"/>
    <property type="match status" value="1"/>
</dbReference>
<dbReference type="Pfam" id="PF00176">
    <property type="entry name" value="SNF2-rel_dom"/>
    <property type="match status" value="1"/>
</dbReference>
<dbReference type="Pfam" id="PF14555">
    <property type="entry name" value="UBA_4"/>
    <property type="match status" value="1"/>
</dbReference>
<dbReference type="Pfam" id="PF00097">
    <property type="entry name" value="zf-C3HC4"/>
    <property type="match status" value="1"/>
</dbReference>
<dbReference type="SMART" id="SM00487">
    <property type="entry name" value="DEXDc"/>
    <property type="match status" value="1"/>
</dbReference>
<dbReference type="SMART" id="SM00490">
    <property type="entry name" value="HELICc"/>
    <property type="match status" value="1"/>
</dbReference>
<dbReference type="SMART" id="SM00910">
    <property type="entry name" value="HIRAN"/>
    <property type="match status" value="1"/>
</dbReference>
<dbReference type="SUPFAM" id="SSF52540">
    <property type="entry name" value="P-loop containing nucleoside triphosphate hydrolases"/>
    <property type="match status" value="2"/>
</dbReference>
<dbReference type="SUPFAM" id="SSF57850">
    <property type="entry name" value="RING/U-box"/>
    <property type="match status" value="1"/>
</dbReference>
<dbReference type="PROSITE" id="PS51192">
    <property type="entry name" value="HELICASE_ATP_BIND_1"/>
    <property type="match status" value="1"/>
</dbReference>
<dbReference type="PROSITE" id="PS51194">
    <property type="entry name" value="HELICASE_CTER"/>
    <property type="match status" value="1"/>
</dbReference>
<dbReference type="PROSITE" id="PS50089">
    <property type="entry name" value="ZF_RING_2"/>
    <property type="match status" value="1"/>
</dbReference>
<protein>
    <recommendedName>
        <fullName evidence="12">DNA repair protein rad8</fullName>
        <ecNumber>3.6.4.-</ecNumber>
    </recommendedName>
    <alternativeName>
        <fullName evidence="10">DNA repair protein RAD5 homolog</fullName>
    </alternativeName>
</protein>
<feature type="chain" id="PRO_0000056127" description="DNA repair protein rad8">
    <location>
        <begin position="1"/>
        <end position="1133"/>
    </location>
</feature>
<feature type="domain" description="Helicase ATP-binding" evidence="3">
    <location>
        <begin position="516"/>
        <end position="705"/>
    </location>
</feature>
<feature type="domain" description="Helicase C-terminal" evidence="4">
    <location>
        <begin position="971"/>
        <end position="1125"/>
    </location>
</feature>
<feature type="zinc finger region" description="RING-type" evidence="2">
    <location>
        <begin position="877"/>
        <end position="923"/>
    </location>
</feature>
<feature type="region of interest" description="Disordered" evidence="5">
    <location>
        <begin position="1"/>
        <end position="34"/>
    </location>
</feature>
<feature type="region of interest" description="Disordered" evidence="5">
    <location>
        <begin position="392"/>
        <end position="413"/>
    </location>
</feature>
<feature type="short sequence motif" description="DEGH box">
    <location>
        <begin position="656"/>
        <end position="659"/>
    </location>
</feature>
<feature type="binding site" evidence="3">
    <location>
        <begin position="529"/>
        <end position="536"/>
    </location>
    <ligand>
        <name>ATP</name>
        <dbReference type="ChEBI" id="CHEBI:30616"/>
    </ligand>
</feature>
<feature type="modified residue" description="Phosphoserine" evidence="8">
    <location>
        <position position="18"/>
    </location>
</feature>
<keyword id="KW-0067">ATP-binding</keyword>
<keyword id="KW-0963">Cytoplasm</keyword>
<keyword id="KW-0227">DNA damage</keyword>
<keyword id="KW-0234">DNA repair</keyword>
<keyword id="KW-0238">DNA-binding</keyword>
<keyword id="KW-0347">Helicase</keyword>
<keyword id="KW-0378">Hydrolase</keyword>
<keyword id="KW-0479">Metal-binding</keyword>
<keyword id="KW-0547">Nucleotide-binding</keyword>
<keyword id="KW-0539">Nucleus</keyword>
<keyword id="KW-0597">Phosphoprotein</keyword>
<keyword id="KW-1185">Reference proteome</keyword>
<keyword id="KW-0677">Repeat</keyword>
<keyword id="KW-0862">Zinc</keyword>
<keyword id="KW-0863">Zinc-finger</keyword>